<feature type="chain" id="PRO_0000279438" description="Transmembrane protein 186">
    <location>
        <begin position="1"/>
        <end position="212"/>
    </location>
</feature>
<feature type="topological domain" description="Mitochondrial matrix" evidence="3">
    <location>
        <begin position="1"/>
        <end position="78"/>
    </location>
</feature>
<feature type="transmembrane region" description="Helical" evidence="2">
    <location>
        <begin position="79"/>
        <end position="99"/>
    </location>
</feature>
<feature type="topological domain" description="Mitochondrial intermembrane" evidence="3">
    <location>
        <begin position="100"/>
        <end position="101"/>
    </location>
</feature>
<feature type="transmembrane region" description="Helical" evidence="2">
    <location>
        <begin position="102"/>
        <end position="122"/>
    </location>
</feature>
<feature type="topological domain" description="Mitochondrial matrix" evidence="3">
    <location>
        <begin position="123"/>
        <end position="212"/>
    </location>
</feature>
<dbReference type="EMBL" id="BT020766">
    <property type="protein sequence ID" value="AAX08783.1"/>
    <property type="molecule type" value="mRNA"/>
</dbReference>
<dbReference type="EMBL" id="BC119850">
    <property type="protein sequence ID" value="AAI19851.1"/>
    <property type="molecule type" value="mRNA"/>
</dbReference>
<dbReference type="RefSeq" id="NP_001014919.1">
    <property type="nucleotide sequence ID" value="NM_001014919.1"/>
</dbReference>
<dbReference type="FunCoup" id="Q5EA03">
    <property type="interactions" value="3461"/>
</dbReference>
<dbReference type="STRING" id="9913.ENSBTAP00000030481"/>
<dbReference type="PaxDb" id="9913-ENSBTAP00000030481"/>
<dbReference type="Ensembl" id="ENSBTAT00000030501.3">
    <property type="protein sequence ID" value="ENSBTAP00000030481.2"/>
    <property type="gene ID" value="ENSBTAG00000022530.3"/>
</dbReference>
<dbReference type="GeneID" id="513552"/>
<dbReference type="KEGG" id="bta:513552"/>
<dbReference type="CTD" id="25880"/>
<dbReference type="VEuPathDB" id="HostDB:ENSBTAG00000022530"/>
<dbReference type="VGNC" id="VGNC:36013">
    <property type="gene designation" value="TMEM186"/>
</dbReference>
<dbReference type="eggNOG" id="ENOG502S11D">
    <property type="taxonomic scope" value="Eukaryota"/>
</dbReference>
<dbReference type="GeneTree" id="ENSGT00390000000087"/>
<dbReference type="HOGENOM" id="CLU_104872_1_0_1"/>
<dbReference type="InParanoid" id="Q5EA03"/>
<dbReference type="OMA" id="MTIGDTG"/>
<dbReference type="OrthoDB" id="6147888at2759"/>
<dbReference type="TreeFam" id="TF326623"/>
<dbReference type="Reactome" id="R-BTA-611105">
    <property type="pathway name" value="Respiratory electron transport"/>
</dbReference>
<dbReference type="Reactome" id="R-BTA-6799198">
    <property type="pathway name" value="Complex I biogenesis"/>
</dbReference>
<dbReference type="Proteomes" id="UP000009136">
    <property type="component" value="Chromosome 25"/>
</dbReference>
<dbReference type="Bgee" id="ENSBTAG00000022530">
    <property type="expression patterns" value="Expressed in choroid plexus and 106 other cell types or tissues"/>
</dbReference>
<dbReference type="GO" id="GO:0005743">
    <property type="term" value="C:mitochondrial inner membrane"/>
    <property type="evidence" value="ECO:0007669"/>
    <property type="project" value="UniProtKB-SubCell"/>
</dbReference>
<dbReference type="GO" id="GO:0005739">
    <property type="term" value="C:mitochondrion"/>
    <property type="evidence" value="ECO:0000250"/>
    <property type="project" value="UniProtKB"/>
</dbReference>
<dbReference type="GO" id="GO:0032981">
    <property type="term" value="P:mitochondrial respiratory chain complex I assembly"/>
    <property type="evidence" value="ECO:0000250"/>
    <property type="project" value="UniProtKB"/>
</dbReference>
<dbReference type="InterPro" id="IPR026571">
    <property type="entry name" value="Tmem186"/>
</dbReference>
<dbReference type="InterPro" id="IPR045325">
    <property type="entry name" value="TMEM70/TMEM186/TMEM223"/>
</dbReference>
<dbReference type="PANTHER" id="PTHR13603">
    <property type="entry name" value="TRANSMEMBRANE PROTEIN 186"/>
    <property type="match status" value="1"/>
</dbReference>
<dbReference type="PANTHER" id="PTHR13603:SF1">
    <property type="entry name" value="TRANSMEMBRANE PROTEIN 186"/>
    <property type="match status" value="1"/>
</dbReference>
<dbReference type="Pfam" id="PF06979">
    <property type="entry name" value="TMEM70"/>
    <property type="match status" value="1"/>
</dbReference>
<sequence length="212" mass="23785">MAAVLRAVARSPGPAAWGRPLHRLCCCGGQDPRRWVGSGPPHSKEKPLGPETEKFQMVYRFDAIKAFGYLSRLKVAQTALTVAALPPGLYCYSQGLMPFSSLCLAGGVAGFALAMLCWMSHFFRRLVGILYVNEEGTVLRVAHLTFWGRRQDTYCPVADVIPMTESPDRPQELFMRIQQYSGKQTFYLTLRYGRVLDQERFTQVFGVLDALK</sequence>
<proteinExistence type="evidence at transcript level"/>
<evidence type="ECO:0000250" key="1">
    <source>
        <dbReference type="UniProtKB" id="Q96B77"/>
    </source>
</evidence>
<evidence type="ECO:0000255" key="2"/>
<evidence type="ECO:0000305" key="3"/>
<comment type="function">
    <text evidence="1">As part of the MCIA complex, required for efficient assembly of the mitochondrial complex I.</text>
</comment>
<comment type="subunit">
    <text evidence="1">Part of the mitochondrial complex I assembly/MCIA complex that comprises at least the core subunits TMEM126B, NDUFAF1, ECSIT and ACAD9 and complement subunits such as COA1 and TMEM186. Interacts with MT-ND3.</text>
</comment>
<comment type="subcellular location">
    <subcellularLocation>
        <location evidence="1">Mitochondrion inner membrane</location>
        <topology evidence="1">Multi-pass membrane protein</topology>
    </subcellularLocation>
</comment>
<comment type="similarity">
    <text evidence="3">Belongs to the TMEM186 family.</text>
</comment>
<organism>
    <name type="scientific">Bos taurus</name>
    <name type="common">Bovine</name>
    <dbReference type="NCBI Taxonomy" id="9913"/>
    <lineage>
        <taxon>Eukaryota</taxon>
        <taxon>Metazoa</taxon>
        <taxon>Chordata</taxon>
        <taxon>Craniata</taxon>
        <taxon>Vertebrata</taxon>
        <taxon>Euteleostomi</taxon>
        <taxon>Mammalia</taxon>
        <taxon>Eutheria</taxon>
        <taxon>Laurasiatheria</taxon>
        <taxon>Artiodactyla</taxon>
        <taxon>Ruminantia</taxon>
        <taxon>Pecora</taxon>
        <taxon>Bovidae</taxon>
        <taxon>Bovinae</taxon>
        <taxon>Bos</taxon>
    </lineage>
</organism>
<keyword id="KW-0472">Membrane</keyword>
<keyword id="KW-0496">Mitochondrion</keyword>
<keyword id="KW-0999">Mitochondrion inner membrane</keyword>
<keyword id="KW-1185">Reference proteome</keyword>
<keyword id="KW-0812">Transmembrane</keyword>
<keyword id="KW-1133">Transmembrane helix</keyword>
<gene>
    <name evidence="1" type="primary">TMEM186</name>
</gene>
<reference key="1">
    <citation type="journal article" date="2005" name="BMC Genomics">
        <title>Characterization of 954 bovine full-CDS cDNA sequences.</title>
        <authorList>
            <person name="Harhay G.P."/>
            <person name="Sonstegard T.S."/>
            <person name="Keele J.W."/>
            <person name="Heaton M.P."/>
            <person name="Clawson M.L."/>
            <person name="Snelling W.M."/>
            <person name="Wiedmann R.T."/>
            <person name="Van Tassell C.P."/>
            <person name="Smith T.P.L."/>
        </authorList>
    </citation>
    <scope>NUCLEOTIDE SEQUENCE [LARGE SCALE MRNA]</scope>
</reference>
<reference key="2">
    <citation type="submission" date="2006-08" db="EMBL/GenBank/DDBJ databases">
        <authorList>
            <consortium name="NIH - Mammalian Gene Collection (MGC) project"/>
        </authorList>
    </citation>
    <scope>NUCLEOTIDE SEQUENCE [LARGE SCALE MRNA]</scope>
    <source>
        <strain>Hereford</strain>
        <tissue>Thalamus</tissue>
    </source>
</reference>
<accession>Q5EA03</accession>
<name>TM186_BOVIN</name>
<protein>
    <recommendedName>
        <fullName evidence="1">Transmembrane protein 186</fullName>
    </recommendedName>
</protein>